<proteinExistence type="inferred from homology"/>
<name>KTHY_NITV9</name>
<protein>
    <recommendedName>
        <fullName evidence="1">Thymidylate kinase</fullName>
        <ecNumber evidence="1">2.7.4.9</ecNumber>
    </recommendedName>
    <alternativeName>
        <fullName evidence="1">dTMP kinase</fullName>
    </alternativeName>
</protein>
<comment type="function">
    <text evidence="1">Phosphorylation of dTMP to form dTDP in both de novo and salvage pathways of dTTP synthesis.</text>
</comment>
<comment type="catalytic activity">
    <reaction evidence="1">
        <text>dTMP + ATP = dTDP + ADP</text>
        <dbReference type="Rhea" id="RHEA:13517"/>
        <dbReference type="ChEBI" id="CHEBI:30616"/>
        <dbReference type="ChEBI" id="CHEBI:58369"/>
        <dbReference type="ChEBI" id="CHEBI:63528"/>
        <dbReference type="ChEBI" id="CHEBI:456216"/>
        <dbReference type="EC" id="2.7.4.9"/>
    </reaction>
</comment>
<comment type="similarity">
    <text evidence="1">Belongs to the thymidylate kinase family.</text>
</comment>
<sequence>MFITFEGMEGSGKSTALNRVQQVLLDAGHGVLLTREPGGSRLGRTLRSILLDLSNDDIVPEAELFLYLADRAQHVGQVIRPALDEGVVVLSDRYADSTVVYQGYGRGLDPERLRELNDMAVGGLWPDLTLVFDLPPEEGLRRAMTRNLREGTSVSEGRFEAEHLAFHARVREGYLTWAALHPARFRVVDATRTPDEVFEDVMRAVRSVLSAPARP</sequence>
<accession>B8DN41</accession>
<gene>
    <name evidence="1" type="primary">tmk</name>
    <name type="ordered locus">DvMF_0023</name>
</gene>
<organism>
    <name type="scientific">Nitratidesulfovibrio vulgaris (strain DSM 19637 / Miyazaki F)</name>
    <name type="common">Desulfovibrio vulgaris</name>
    <dbReference type="NCBI Taxonomy" id="883"/>
    <lineage>
        <taxon>Bacteria</taxon>
        <taxon>Pseudomonadati</taxon>
        <taxon>Thermodesulfobacteriota</taxon>
        <taxon>Desulfovibrionia</taxon>
        <taxon>Desulfovibrionales</taxon>
        <taxon>Desulfovibrionaceae</taxon>
        <taxon>Nitratidesulfovibrio</taxon>
    </lineage>
</organism>
<dbReference type="EC" id="2.7.4.9" evidence="1"/>
<dbReference type="EMBL" id="CP001197">
    <property type="protein sequence ID" value="ACL06985.1"/>
    <property type="molecule type" value="Genomic_DNA"/>
</dbReference>
<dbReference type="SMR" id="B8DN41"/>
<dbReference type="STRING" id="883.DvMF_0023"/>
<dbReference type="KEGG" id="dvm:DvMF_0023"/>
<dbReference type="eggNOG" id="COG0125">
    <property type="taxonomic scope" value="Bacteria"/>
</dbReference>
<dbReference type="HOGENOM" id="CLU_049131_0_2_7"/>
<dbReference type="OrthoDB" id="9774907at2"/>
<dbReference type="GO" id="GO:0005829">
    <property type="term" value="C:cytosol"/>
    <property type="evidence" value="ECO:0007669"/>
    <property type="project" value="TreeGrafter"/>
</dbReference>
<dbReference type="GO" id="GO:0005524">
    <property type="term" value="F:ATP binding"/>
    <property type="evidence" value="ECO:0007669"/>
    <property type="project" value="UniProtKB-UniRule"/>
</dbReference>
<dbReference type="GO" id="GO:0004798">
    <property type="term" value="F:dTMP kinase activity"/>
    <property type="evidence" value="ECO:0007669"/>
    <property type="project" value="UniProtKB-UniRule"/>
</dbReference>
<dbReference type="GO" id="GO:0006233">
    <property type="term" value="P:dTDP biosynthetic process"/>
    <property type="evidence" value="ECO:0007669"/>
    <property type="project" value="InterPro"/>
</dbReference>
<dbReference type="GO" id="GO:0006235">
    <property type="term" value="P:dTTP biosynthetic process"/>
    <property type="evidence" value="ECO:0007669"/>
    <property type="project" value="UniProtKB-UniRule"/>
</dbReference>
<dbReference type="GO" id="GO:0006227">
    <property type="term" value="P:dUDP biosynthetic process"/>
    <property type="evidence" value="ECO:0007669"/>
    <property type="project" value="TreeGrafter"/>
</dbReference>
<dbReference type="CDD" id="cd01672">
    <property type="entry name" value="TMPK"/>
    <property type="match status" value="1"/>
</dbReference>
<dbReference type="FunFam" id="3.40.50.300:FF:000225">
    <property type="entry name" value="Thymidylate kinase"/>
    <property type="match status" value="1"/>
</dbReference>
<dbReference type="Gene3D" id="3.40.50.300">
    <property type="entry name" value="P-loop containing nucleotide triphosphate hydrolases"/>
    <property type="match status" value="1"/>
</dbReference>
<dbReference type="HAMAP" id="MF_00165">
    <property type="entry name" value="Thymidylate_kinase"/>
    <property type="match status" value="1"/>
</dbReference>
<dbReference type="InterPro" id="IPR027417">
    <property type="entry name" value="P-loop_NTPase"/>
</dbReference>
<dbReference type="InterPro" id="IPR039430">
    <property type="entry name" value="Thymidylate_kin-like_dom"/>
</dbReference>
<dbReference type="InterPro" id="IPR018095">
    <property type="entry name" value="Thymidylate_kin_CS"/>
</dbReference>
<dbReference type="InterPro" id="IPR018094">
    <property type="entry name" value="Thymidylate_kinase"/>
</dbReference>
<dbReference type="NCBIfam" id="TIGR00041">
    <property type="entry name" value="DTMP_kinase"/>
    <property type="match status" value="1"/>
</dbReference>
<dbReference type="PANTHER" id="PTHR10344">
    <property type="entry name" value="THYMIDYLATE KINASE"/>
    <property type="match status" value="1"/>
</dbReference>
<dbReference type="PANTHER" id="PTHR10344:SF4">
    <property type="entry name" value="UMP-CMP KINASE 2, MITOCHONDRIAL"/>
    <property type="match status" value="1"/>
</dbReference>
<dbReference type="Pfam" id="PF02223">
    <property type="entry name" value="Thymidylate_kin"/>
    <property type="match status" value="1"/>
</dbReference>
<dbReference type="SUPFAM" id="SSF52540">
    <property type="entry name" value="P-loop containing nucleoside triphosphate hydrolases"/>
    <property type="match status" value="1"/>
</dbReference>
<dbReference type="PROSITE" id="PS01331">
    <property type="entry name" value="THYMIDYLATE_KINASE"/>
    <property type="match status" value="1"/>
</dbReference>
<feature type="chain" id="PRO_1000190760" description="Thymidylate kinase">
    <location>
        <begin position="1"/>
        <end position="215"/>
    </location>
</feature>
<feature type="binding site" evidence="1">
    <location>
        <begin position="7"/>
        <end position="14"/>
    </location>
    <ligand>
        <name>ATP</name>
        <dbReference type="ChEBI" id="CHEBI:30616"/>
    </ligand>
</feature>
<keyword id="KW-0067">ATP-binding</keyword>
<keyword id="KW-0418">Kinase</keyword>
<keyword id="KW-0545">Nucleotide biosynthesis</keyword>
<keyword id="KW-0547">Nucleotide-binding</keyword>
<keyword id="KW-0808">Transferase</keyword>
<evidence type="ECO:0000255" key="1">
    <source>
        <dbReference type="HAMAP-Rule" id="MF_00165"/>
    </source>
</evidence>
<reference key="1">
    <citation type="submission" date="2008-10" db="EMBL/GenBank/DDBJ databases">
        <title>Complete sequence of Desulfovibrio vulgaris str. 'Miyazaki F'.</title>
        <authorList>
            <person name="Lucas S."/>
            <person name="Copeland A."/>
            <person name="Lapidus A."/>
            <person name="Glavina del Rio T."/>
            <person name="Dalin E."/>
            <person name="Tice H."/>
            <person name="Bruce D."/>
            <person name="Goodwin L."/>
            <person name="Pitluck S."/>
            <person name="Sims D."/>
            <person name="Brettin T."/>
            <person name="Detter J.C."/>
            <person name="Han C."/>
            <person name="Larimer F."/>
            <person name="Land M."/>
            <person name="Hauser L."/>
            <person name="Kyrpides N."/>
            <person name="Mikhailova N."/>
            <person name="Hazen T.C."/>
            <person name="Richardson P."/>
        </authorList>
    </citation>
    <scope>NUCLEOTIDE SEQUENCE [LARGE SCALE GENOMIC DNA]</scope>
    <source>
        <strain>DSM 19637 / Miyazaki F</strain>
    </source>
</reference>